<name>LFTR_VIBCH</name>
<reference key="1">
    <citation type="journal article" date="2000" name="Nature">
        <title>DNA sequence of both chromosomes of the cholera pathogen Vibrio cholerae.</title>
        <authorList>
            <person name="Heidelberg J.F."/>
            <person name="Eisen J.A."/>
            <person name="Nelson W.C."/>
            <person name="Clayton R.A."/>
            <person name="Gwinn M.L."/>
            <person name="Dodson R.J."/>
            <person name="Haft D.H."/>
            <person name="Hickey E.K."/>
            <person name="Peterson J.D."/>
            <person name="Umayam L.A."/>
            <person name="Gill S.R."/>
            <person name="Nelson K.E."/>
            <person name="Read T.D."/>
            <person name="Tettelin H."/>
            <person name="Richardson D.L."/>
            <person name="Ermolaeva M.D."/>
            <person name="Vamathevan J.J."/>
            <person name="Bass S."/>
            <person name="Qin H."/>
            <person name="Dragoi I."/>
            <person name="Sellers P."/>
            <person name="McDonald L.A."/>
            <person name="Utterback T.R."/>
            <person name="Fleischmann R.D."/>
            <person name="Nierman W.C."/>
            <person name="White O."/>
            <person name="Salzberg S.L."/>
            <person name="Smith H.O."/>
            <person name="Colwell R.R."/>
            <person name="Mekalanos J.J."/>
            <person name="Venter J.C."/>
            <person name="Fraser C.M."/>
        </authorList>
    </citation>
    <scope>NUCLEOTIDE SEQUENCE [LARGE SCALE GENOMIC DNA]</scope>
    <source>
        <strain>ATCC 39315 / El Tor Inaba N16961</strain>
    </source>
</reference>
<reference key="2">
    <citation type="journal article" date="1997" name="J. Biol. Chem.">
        <title>Substrate recognition by the leucyl/phenylalanyl-tRNA-protein transferase. Conservation within the enzyme family and localization to the trypsin-resistant domain.</title>
        <authorList>
            <person name="Ichetovkin I.E."/>
            <person name="Abramochkin G."/>
            <person name="Shrader T.E."/>
        </authorList>
    </citation>
    <scope>NUCLEOTIDE SEQUENCE [GENOMIC DNA] OF 1-208</scope>
</reference>
<sequence length="243" mass="27569">MAIYLTELSPETLTFPSPFTALDDPNGLLAFGGDLRLERIWAAYQQGIFPWYGPEDPILWWSPSPRAVFDPTRFQPAKSVKKFQRKHQYRVSVNHATSQVIEQCALTRPADQRWLNDSMRHAYGELAKQGRCHSVEVWQGEQLVGGLYGISVGQLFCGESMFSLATNASKIALWYFCDHFSRHQGQLIDCQVMNPHLQSLGATTLSREQFIQSLLSFKEKQVLSGCFETQWLATPTSPCAFED</sequence>
<dbReference type="EC" id="2.3.2.6" evidence="1"/>
<dbReference type="EMBL" id="AE003852">
    <property type="protein sequence ID" value="AAF94885.1"/>
    <property type="molecule type" value="Genomic_DNA"/>
</dbReference>
<dbReference type="EMBL" id="AF035002">
    <property type="protein sequence ID" value="AAB87633.1"/>
    <property type="status" value="ALT_FRAME"/>
    <property type="molecule type" value="Genomic_DNA"/>
</dbReference>
<dbReference type="PIR" id="G82163">
    <property type="entry name" value="G82163"/>
</dbReference>
<dbReference type="RefSeq" id="NP_231371.1">
    <property type="nucleotide sequence ID" value="NC_002505.1"/>
</dbReference>
<dbReference type="RefSeq" id="WP_001029434.1">
    <property type="nucleotide sequence ID" value="NZ_LT906614.1"/>
</dbReference>
<dbReference type="SMR" id="Q9KRA7"/>
<dbReference type="STRING" id="243277.VC_1735"/>
<dbReference type="DNASU" id="2613740"/>
<dbReference type="EnsemblBacteria" id="AAF94885">
    <property type="protein sequence ID" value="AAF94885"/>
    <property type="gene ID" value="VC_1735"/>
</dbReference>
<dbReference type="KEGG" id="vch:VC_1735"/>
<dbReference type="PATRIC" id="fig|243277.26.peg.1658"/>
<dbReference type="eggNOG" id="COG2360">
    <property type="taxonomic scope" value="Bacteria"/>
</dbReference>
<dbReference type="HOGENOM" id="CLU_075045_0_0_6"/>
<dbReference type="Proteomes" id="UP000000584">
    <property type="component" value="Chromosome 1"/>
</dbReference>
<dbReference type="GO" id="GO:0005737">
    <property type="term" value="C:cytoplasm"/>
    <property type="evidence" value="ECO:0000318"/>
    <property type="project" value="GO_Central"/>
</dbReference>
<dbReference type="GO" id="GO:0008914">
    <property type="term" value="F:leucyl-tRNA--protein transferase activity"/>
    <property type="evidence" value="ECO:0000318"/>
    <property type="project" value="GO_Central"/>
</dbReference>
<dbReference type="GO" id="GO:0030163">
    <property type="term" value="P:protein catabolic process"/>
    <property type="evidence" value="ECO:0007669"/>
    <property type="project" value="UniProtKB-UniRule"/>
</dbReference>
<dbReference type="FunFam" id="3.30.70.3550:FF:000001">
    <property type="entry name" value="Leucyl/phenylalanyl-tRNA--protein transferase"/>
    <property type="match status" value="1"/>
</dbReference>
<dbReference type="FunFam" id="3.40.630.70:FF:000005">
    <property type="entry name" value="Leucyl/phenylalanyl-tRNA--protein transferase"/>
    <property type="match status" value="1"/>
</dbReference>
<dbReference type="Gene3D" id="3.40.630.70">
    <property type="entry name" value="Leucyl/phenylalanyl-tRNA-protein transferase, C-terminal domain"/>
    <property type="match status" value="1"/>
</dbReference>
<dbReference type="Gene3D" id="3.30.70.3550">
    <property type="entry name" value="Leucyl/phenylalanyl-tRNA-protein transferase, N-terminal domain"/>
    <property type="match status" value="1"/>
</dbReference>
<dbReference type="HAMAP" id="MF_00688">
    <property type="entry name" value="Leu_Phe_trans"/>
    <property type="match status" value="1"/>
</dbReference>
<dbReference type="InterPro" id="IPR016181">
    <property type="entry name" value="Acyl_CoA_acyltransferase"/>
</dbReference>
<dbReference type="InterPro" id="IPR004616">
    <property type="entry name" value="Leu/Phe-tRNA_Trfase"/>
</dbReference>
<dbReference type="InterPro" id="IPR042203">
    <property type="entry name" value="Leu/Phe-tRNA_Trfase_C"/>
</dbReference>
<dbReference type="InterPro" id="IPR042221">
    <property type="entry name" value="Leu/Phe-tRNA_Trfase_N"/>
</dbReference>
<dbReference type="NCBIfam" id="TIGR00667">
    <property type="entry name" value="aat"/>
    <property type="match status" value="1"/>
</dbReference>
<dbReference type="PANTHER" id="PTHR30098">
    <property type="entry name" value="LEUCYL/PHENYLALANYL-TRNA--PROTEIN TRANSFERASE"/>
    <property type="match status" value="1"/>
</dbReference>
<dbReference type="PANTHER" id="PTHR30098:SF2">
    <property type="entry name" value="LEUCYL_PHENYLALANYL-TRNA--PROTEIN TRANSFERASE"/>
    <property type="match status" value="1"/>
</dbReference>
<dbReference type="Pfam" id="PF03588">
    <property type="entry name" value="Leu_Phe_trans"/>
    <property type="match status" value="1"/>
</dbReference>
<dbReference type="SUPFAM" id="SSF55729">
    <property type="entry name" value="Acyl-CoA N-acyltransferases (Nat)"/>
    <property type="match status" value="1"/>
</dbReference>
<keyword id="KW-0012">Acyltransferase</keyword>
<keyword id="KW-0963">Cytoplasm</keyword>
<keyword id="KW-1185">Reference proteome</keyword>
<keyword id="KW-0808">Transferase</keyword>
<gene>
    <name evidence="1" type="primary">aat</name>
    <name type="ordered locus">VC_1735</name>
</gene>
<accession>Q9KRA7</accession>
<accession>O50259</accession>
<proteinExistence type="inferred from homology"/>
<protein>
    <recommendedName>
        <fullName evidence="1">Leucyl/phenylalanyl-tRNA--protein transferase</fullName>
        <ecNumber evidence="1">2.3.2.6</ecNumber>
    </recommendedName>
    <alternativeName>
        <fullName evidence="1">L/F-transferase</fullName>
    </alternativeName>
    <alternativeName>
        <fullName evidence="1">Leucyltransferase</fullName>
    </alternativeName>
    <alternativeName>
        <fullName evidence="1">Phenyalanyltransferase</fullName>
    </alternativeName>
</protein>
<evidence type="ECO:0000255" key="1">
    <source>
        <dbReference type="HAMAP-Rule" id="MF_00688"/>
    </source>
</evidence>
<evidence type="ECO:0000305" key="2"/>
<organism>
    <name type="scientific">Vibrio cholerae serotype O1 (strain ATCC 39315 / El Tor Inaba N16961)</name>
    <dbReference type="NCBI Taxonomy" id="243277"/>
    <lineage>
        <taxon>Bacteria</taxon>
        <taxon>Pseudomonadati</taxon>
        <taxon>Pseudomonadota</taxon>
        <taxon>Gammaproteobacteria</taxon>
        <taxon>Vibrionales</taxon>
        <taxon>Vibrionaceae</taxon>
        <taxon>Vibrio</taxon>
    </lineage>
</organism>
<comment type="function">
    <text evidence="1">Functions in the N-end rule pathway of protein degradation where it conjugates Leu, Phe and, less efficiently, Met from aminoacyl-tRNAs to the N-termini of proteins containing an N-terminal arginine or lysine.</text>
</comment>
<comment type="catalytic activity">
    <reaction evidence="1">
        <text>N-terminal L-lysyl-[protein] + L-leucyl-tRNA(Leu) = N-terminal L-leucyl-L-lysyl-[protein] + tRNA(Leu) + H(+)</text>
        <dbReference type="Rhea" id="RHEA:12340"/>
        <dbReference type="Rhea" id="RHEA-COMP:9613"/>
        <dbReference type="Rhea" id="RHEA-COMP:9622"/>
        <dbReference type="Rhea" id="RHEA-COMP:12670"/>
        <dbReference type="Rhea" id="RHEA-COMP:12671"/>
        <dbReference type="ChEBI" id="CHEBI:15378"/>
        <dbReference type="ChEBI" id="CHEBI:65249"/>
        <dbReference type="ChEBI" id="CHEBI:78442"/>
        <dbReference type="ChEBI" id="CHEBI:78494"/>
        <dbReference type="ChEBI" id="CHEBI:133043"/>
        <dbReference type="EC" id="2.3.2.6"/>
    </reaction>
</comment>
<comment type="catalytic activity">
    <reaction evidence="1">
        <text>N-terminal L-arginyl-[protein] + L-leucyl-tRNA(Leu) = N-terminal L-leucyl-L-arginyl-[protein] + tRNA(Leu) + H(+)</text>
        <dbReference type="Rhea" id="RHEA:50416"/>
        <dbReference type="Rhea" id="RHEA-COMP:9613"/>
        <dbReference type="Rhea" id="RHEA-COMP:9622"/>
        <dbReference type="Rhea" id="RHEA-COMP:12672"/>
        <dbReference type="Rhea" id="RHEA-COMP:12673"/>
        <dbReference type="ChEBI" id="CHEBI:15378"/>
        <dbReference type="ChEBI" id="CHEBI:64719"/>
        <dbReference type="ChEBI" id="CHEBI:78442"/>
        <dbReference type="ChEBI" id="CHEBI:78494"/>
        <dbReference type="ChEBI" id="CHEBI:133044"/>
        <dbReference type="EC" id="2.3.2.6"/>
    </reaction>
</comment>
<comment type="catalytic activity">
    <reaction evidence="1">
        <text>L-phenylalanyl-tRNA(Phe) + an N-terminal L-alpha-aminoacyl-[protein] = an N-terminal L-phenylalanyl-L-alpha-aminoacyl-[protein] + tRNA(Phe)</text>
        <dbReference type="Rhea" id="RHEA:43632"/>
        <dbReference type="Rhea" id="RHEA-COMP:9668"/>
        <dbReference type="Rhea" id="RHEA-COMP:9699"/>
        <dbReference type="Rhea" id="RHEA-COMP:10636"/>
        <dbReference type="Rhea" id="RHEA-COMP:10637"/>
        <dbReference type="ChEBI" id="CHEBI:78442"/>
        <dbReference type="ChEBI" id="CHEBI:78531"/>
        <dbReference type="ChEBI" id="CHEBI:78597"/>
        <dbReference type="ChEBI" id="CHEBI:83561"/>
        <dbReference type="EC" id="2.3.2.6"/>
    </reaction>
</comment>
<comment type="subcellular location">
    <subcellularLocation>
        <location evidence="1">Cytoplasm</location>
    </subcellularLocation>
</comment>
<comment type="similarity">
    <text evidence="1">Belongs to the L/F-transferase family.</text>
</comment>
<comment type="sequence caution" evidence="2">
    <conflict type="frameshift">
        <sequence resource="EMBL-CDS" id="AAB87633"/>
    </conflict>
</comment>
<feature type="chain" id="PRO_0000207247" description="Leucyl/phenylalanyl-tRNA--protein transferase">
    <location>
        <begin position="1"/>
        <end position="243"/>
    </location>
</feature>